<feature type="chain" id="PRO_0000129015" description="DNA-directed RNA polymerase subunit omega">
    <location>
        <begin position="1"/>
        <end position="99"/>
    </location>
</feature>
<proteinExistence type="inferred from homology"/>
<sequence length="99" mass="11143">MARITVEDCLEVVNNRFELVMMASKRARQLANGVQPLIENADASDKPTVMALREIAARRIDNALIDEVEKAERERAEREALEWAAAEVVADEDMSKNDD</sequence>
<reference key="1">
    <citation type="journal article" date="2002" name="Nature">
        <title>Comparison of the genomes of two Xanthomonas pathogens with differing host specificities.</title>
        <authorList>
            <person name="da Silva A.C.R."/>
            <person name="Ferro J.A."/>
            <person name="Reinach F.C."/>
            <person name="Farah C.S."/>
            <person name="Furlan L.R."/>
            <person name="Quaggio R.B."/>
            <person name="Monteiro-Vitorello C.B."/>
            <person name="Van Sluys M.A."/>
            <person name="Almeida N.F. Jr."/>
            <person name="Alves L.M.C."/>
            <person name="do Amaral A.M."/>
            <person name="Bertolini M.C."/>
            <person name="Camargo L.E.A."/>
            <person name="Camarotte G."/>
            <person name="Cannavan F."/>
            <person name="Cardozo J."/>
            <person name="Chambergo F."/>
            <person name="Ciapina L.P."/>
            <person name="Cicarelli R.M.B."/>
            <person name="Coutinho L.L."/>
            <person name="Cursino-Santos J.R."/>
            <person name="El-Dorry H."/>
            <person name="Faria J.B."/>
            <person name="Ferreira A.J.S."/>
            <person name="Ferreira R.C.C."/>
            <person name="Ferro M.I.T."/>
            <person name="Formighieri E.F."/>
            <person name="Franco M.C."/>
            <person name="Greggio C.C."/>
            <person name="Gruber A."/>
            <person name="Katsuyama A.M."/>
            <person name="Kishi L.T."/>
            <person name="Leite R.P."/>
            <person name="Lemos E.G.M."/>
            <person name="Lemos M.V.F."/>
            <person name="Locali E.C."/>
            <person name="Machado M.A."/>
            <person name="Madeira A.M.B.N."/>
            <person name="Martinez-Rossi N.M."/>
            <person name="Martins E.C."/>
            <person name="Meidanis J."/>
            <person name="Menck C.F.M."/>
            <person name="Miyaki C.Y."/>
            <person name="Moon D.H."/>
            <person name="Moreira L.M."/>
            <person name="Novo M.T.M."/>
            <person name="Okura V.K."/>
            <person name="Oliveira M.C."/>
            <person name="Oliveira V.R."/>
            <person name="Pereira H.A."/>
            <person name="Rossi A."/>
            <person name="Sena J.A.D."/>
            <person name="Silva C."/>
            <person name="de Souza R.F."/>
            <person name="Spinola L.A.F."/>
            <person name="Takita M.A."/>
            <person name="Tamura R.E."/>
            <person name="Teixeira E.C."/>
            <person name="Tezza R.I.D."/>
            <person name="Trindade dos Santos M."/>
            <person name="Truffi D."/>
            <person name="Tsai S.M."/>
            <person name="White F.F."/>
            <person name="Setubal J.C."/>
            <person name="Kitajima J.P."/>
        </authorList>
    </citation>
    <scope>NUCLEOTIDE SEQUENCE [LARGE SCALE GENOMIC DNA]</scope>
    <source>
        <strain>306</strain>
    </source>
</reference>
<protein>
    <recommendedName>
        <fullName evidence="1">DNA-directed RNA polymerase subunit omega</fullName>
        <shortName evidence="1">RNAP omega subunit</shortName>
        <ecNumber evidence="1">2.7.7.6</ecNumber>
    </recommendedName>
    <alternativeName>
        <fullName evidence="1">RNA polymerase omega subunit</fullName>
    </alternativeName>
    <alternativeName>
        <fullName evidence="1">Transcriptase subunit omega</fullName>
    </alternativeName>
</protein>
<keyword id="KW-0240">DNA-directed RNA polymerase</keyword>
<keyword id="KW-0548">Nucleotidyltransferase</keyword>
<keyword id="KW-0804">Transcription</keyword>
<keyword id="KW-0808">Transferase</keyword>
<dbReference type="EC" id="2.7.7.6" evidence="1"/>
<dbReference type="EMBL" id="AE008923">
    <property type="protein sequence ID" value="AAM38237.1"/>
    <property type="molecule type" value="Genomic_DNA"/>
</dbReference>
<dbReference type="RefSeq" id="WP_002812428.1">
    <property type="nucleotide sequence ID" value="NC_003919.1"/>
</dbReference>
<dbReference type="SMR" id="P66732"/>
<dbReference type="GeneID" id="97511588"/>
<dbReference type="KEGG" id="xac:XAC3394"/>
<dbReference type="eggNOG" id="COG1758">
    <property type="taxonomic scope" value="Bacteria"/>
</dbReference>
<dbReference type="HOGENOM" id="CLU_125406_5_3_6"/>
<dbReference type="Proteomes" id="UP000000576">
    <property type="component" value="Chromosome"/>
</dbReference>
<dbReference type="GO" id="GO:0000428">
    <property type="term" value="C:DNA-directed RNA polymerase complex"/>
    <property type="evidence" value="ECO:0007669"/>
    <property type="project" value="UniProtKB-KW"/>
</dbReference>
<dbReference type="GO" id="GO:0003677">
    <property type="term" value="F:DNA binding"/>
    <property type="evidence" value="ECO:0007669"/>
    <property type="project" value="UniProtKB-UniRule"/>
</dbReference>
<dbReference type="GO" id="GO:0003899">
    <property type="term" value="F:DNA-directed RNA polymerase activity"/>
    <property type="evidence" value="ECO:0007669"/>
    <property type="project" value="UniProtKB-UniRule"/>
</dbReference>
<dbReference type="GO" id="GO:0006351">
    <property type="term" value="P:DNA-templated transcription"/>
    <property type="evidence" value="ECO:0007669"/>
    <property type="project" value="UniProtKB-UniRule"/>
</dbReference>
<dbReference type="Gene3D" id="3.90.940.10">
    <property type="match status" value="1"/>
</dbReference>
<dbReference type="HAMAP" id="MF_00366">
    <property type="entry name" value="RNApol_bact_RpoZ"/>
    <property type="match status" value="1"/>
</dbReference>
<dbReference type="InterPro" id="IPR003716">
    <property type="entry name" value="DNA-dir_RNA_pol_omega"/>
</dbReference>
<dbReference type="InterPro" id="IPR006110">
    <property type="entry name" value="Pol_omega/Rpo6/RPB6"/>
</dbReference>
<dbReference type="InterPro" id="IPR036161">
    <property type="entry name" value="RPB6/omega-like_sf"/>
</dbReference>
<dbReference type="NCBIfam" id="TIGR00690">
    <property type="entry name" value="rpoZ"/>
    <property type="match status" value="1"/>
</dbReference>
<dbReference type="PANTHER" id="PTHR34476">
    <property type="entry name" value="DNA-DIRECTED RNA POLYMERASE SUBUNIT OMEGA"/>
    <property type="match status" value="1"/>
</dbReference>
<dbReference type="PANTHER" id="PTHR34476:SF1">
    <property type="entry name" value="DNA-DIRECTED RNA POLYMERASE SUBUNIT OMEGA"/>
    <property type="match status" value="1"/>
</dbReference>
<dbReference type="Pfam" id="PF01192">
    <property type="entry name" value="RNA_pol_Rpb6"/>
    <property type="match status" value="1"/>
</dbReference>
<dbReference type="SMART" id="SM01409">
    <property type="entry name" value="RNA_pol_Rpb6"/>
    <property type="match status" value="1"/>
</dbReference>
<dbReference type="SUPFAM" id="SSF63562">
    <property type="entry name" value="RPB6/omega subunit-like"/>
    <property type="match status" value="1"/>
</dbReference>
<accession>P66732</accession>
<accession>Q8NL41</accession>
<name>RPOZ_XANAC</name>
<evidence type="ECO:0000255" key="1">
    <source>
        <dbReference type="HAMAP-Rule" id="MF_00366"/>
    </source>
</evidence>
<comment type="function">
    <text evidence="1">Promotes RNA polymerase assembly. Latches the N- and C-terminal regions of the beta' subunit thereby facilitating its interaction with the beta and alpha subunits.</text>
</comment>
<comment type="catalytic activity">
    <reaction evidence="1">
        <text>RNA(n) + a ribonucleoside 5'-triphosphate = RNA(n+1) + diphosphate</text>
        <dbReference type="Rhea" id="RHEA:21248"/>
        <dbReference type="Rhea" id="RHEA-COMP:14527"/>
        <dbReference type="Rhea" id="RHEA-COMP:17342"/>
        <dbReference type="ChEBI" id="CHEBI:33019"/>
        <dbReference type="ChEBI" id="CHEBI:61557"/>
        <dbReference type="ChEBI" id="CHEBI:140395"/>
        <dbReference type="EC" id="2.7.7.6"/>
    </reaction>
</comment>
<comment type="subunit">
    <text evidence="1">The RNAP catalytic core consists of 2 alpha, 1 beta, 1 beta' and 1 omega subunit. When a sigma factor is associated with the core the holoenzyme is formed, which can initiate transcription.</text>
</comment>
<comment type="similarity">
    <text evidence="1">Belongs to the RNA polymerase subunit omega family.</text>
</comment>
<gene>
    <name evidence="1" type="primary">rpoZ</name>
    <name type="ordered locus">XAC3394</name>
</gene>
<organism>
    <name type="scientific">Xanthomonas axonopodis pv. citri (strain 306)</name>
    <dbReference type="NCBI Taxonomy" id="190486"/>
    <lineage>
        <taxon>Bacteria</taxon>
        <taxon>Pseudomonadati</taxon>
        <taxon>Pseudomonadota</taxon>
        <taxon>Gammaproteobacteria</taxon>
        <taxon>Lysobacterales</taxon>
        <taxon>Lysobacteraceae</taxon>
        <taxon>Xanthomonas</taxon>
    </lineage>
</organism>